<name>TAF3_MOUSE</name>
<sequence>MCESYSRSLLRVSVAQICQALGWDSVQLSACHLLTDVLQRYLQQLGRGCHRYSELYGRTDPILDDVGEAFQLMGVNLHELEDYIHNIEPVTFPHQIPSFPVSKNNVLQFPQPGSKDAEERKDYIPDYLPPIVSSQEEEEEEQVPTDGGTSAEAMQVPLEEDDEMEEEEVINDENFLGKRPLDSPEVEEMPSMKRPRLLSTKGDSLDVVLLEAREPLSSINPQKTPPVLSPVRVQDRADLAPPSPQPPMLAPFAKSQLPIAKPLETKSFTPKTKTKASSPGQKTKSPKAALSPARLGSPIRSPKTIPKEKKSPGRSKSPKSPKSPKIVAHVPQTPVRPETPNRTPSAMVVEKTVKETIPVMKPTQTPPEVVKLNIEMQPKKPVVTDKTIDDSIDAVIARACAEREPDPFEFSSGSESEGDTFTSPKRISGSECATPKASTSSNNFTKSLATPLPLSSGTSSSDNSWTMDASIDEVVRKAKLGAPSNMPPTFPYISSPSISPPTPEPLHKGYEEKAKLPSSVDVKKKLKKELKTKLKKKEKQRDRERERERNKERSKEKDKMREREKEKEAGKELKYPWRELMKDEDSDPYKFKIKEFEDIDAAKVRLKDGIVRREREKHKDKKKDRERSKREKDKRERERLKEKNREDKIKAPPTQLVLPPKEMALPLFSPSAVRVPAMLPAFSPMLPEKLFEEKEKPKEKERKKDKKEKKKKKEKEKEKEKKEREREKERREREKREKEKEKHKHEKIKVEPVIPAPSPVIPRLTLRVGAGQDKIVISKVVPAPEAKPAPSLNRPKTPPPAPVPIPVRVSPTPLQPPLLTQAAVCPALMPSPAPALSGIGSAKAPVRSVVTETVSTYVIRDEWGNQIWICPGCNKPDDGSPMIGCDDCDDWYHWPCVGIMAAPPEEMQWFCPKCANKIKKDKKHKKRKHRAH</sequence>
<organism>
    <name type="scientific">Mus musculus</name>
    <name type="common">Mouse</name>
    <dbReference type="NCBI Taxonomy" id="10090"/>
    <lineage>
        <taxon>Eukaryota</taxon>
        <taxon>Metazoa</taxon>
        <taxon>Chordata</taxon>
        <taxon>Craniata</taxon>
        <taxon>Vertebrata</taxon>
        <taxon>Euteleostomi</taxon>
        <taxon>Mammalia</taxon>
        <taxon>Eutheria</taxon>
        <taxon>Euarchontoglires</taxon>
        <taxon>Glires</taxon>
        <taxon>Rodentia</taxon>
        <taxon>Myomorpha</taxon>
        <taxon>Muroidea</taxon>
        <taxon>Muridae</taxon>
        <taxon>Murinae</taxon>
        <taxon>Mus</taxon>
        <taxon>Mus</taxon>
    </lineage>
</organism>
<proteinExistence type="evidence at protein level"/>
<protein>
    <recommendedName>
        <fullName>Transcription initiation factor TFIID subunit 3</fullName>
    </recommendedName>
    <alternativeName>
        <fullName>140 kDa TATA box-binding protein-associated factor</fullName>
    </alternativeName>
    <alternativeName>
        <fullName>TBP-associated factor 3</fullName>
    </alternativeName>
    <alternativeName>
        <fullName>Transcription initiation factor TFIID 140 kDa subunit</fullName>
        <shortName>TAF(II)140</shortName>
        <shortName>TAF140</shortName>
        <shortName>TAFII-140</shortName>
        <shortName>TAFII140</shortName>
    </alternativeName>
</protein>
<keyword id="KW-0002">3D-structure</keyword>
<keyword id="KW-0007">Acetylation</keyword>
<keyword id="KW-0025">Alternative splicing</keyword>
<keyword id="KW-1017">Isopeptide bond</keyword>
<keyword id="KW-0479">Metal-binding</keyword>
<keyword id="KW-0539">Nucleus</keyword>
<keyword id="KW-0597">Phosphoprotein</keyword>
<keyword id="KW-1185">Reference proteome</keyword>
<keyword id="KW-0804">Transcription</keyword>
<keyword id="KW-0805">Transcription regulation</keyword>
<keyword id="KW-0832">Ubl conjugation</keyword>
<keyword id="KW-0862">Zinc</keyword>
<keyword id="KW-0863">Zinc-finger</keyword>
<gene>
    <name type="primary">Taf3</name>
</gene>
<reference key="1">
    <citation type="journal article" date="2001" name="Mol. Cell. Biol.">
        <title>The TFIID components human TAFII140 and Drosophila BIP2 (TAFII155) are novel metazoan homologues of yeast TAFII47 containing a histone fold and a PHD finger.</title>
        <authorList>
            <person name="Gangloff Y.G."/>
            <person name="Pointud J.-C."/>
            <person name="Thuault S."/>
            <person name="Carre L."/>
            <person name="Romier C."/>
            <person name="Muratoglu S."/>
            <person name="Brand M."/>
            <person name="Tora L."/>
            <person name="Couderc J.-L."/>
            <person name="Davidson I."/>
        </authorList>
    </citation>
    <scope>NUCLEOTIDE SEQUENCE [MRNA] (ISOFORM 1)</scope>
    <scope>INTERACTION WITH TAF10</scope>
    <source>
        <tissue>Embryonic carcinoma</tissue>
    </source>
</reference>
<reference key="2">
    <citation type="journal article" date="2005" name="Science">
        <title>The transcriptional landscape of the mammalian genome.</title>
        <authorList>
            <person name="Carninci P."/>
            <person name="Kasukawa T."/>
            <person name="Katayama S."/>
            <person name="Gough J."/>
            <person name="Frith M.C."/>
            <person name="Maeda N."/>
            <person name="Oyama R."/>
            <person name="Ravasi T."/>
            <person name="Lenhard B."/>
            <person name="Wells C."/>
            <person name="Kodzius R."/>
            <person name="Shimokawa K."/>
            <person name="Bajic V.B."/>
            <person name="Brenner S.E."/>
            <person name="Batalov S."/>
            <person name="Forrest A.R."/>
            <person name="Zavolan M."/>
            <person name="Davis M.J."/>
            <person name="Wilming L.G."/>
            <person name="Aidinis V."/>
            <person name="Allen J.E."/>
            <person name="Ambesi-Impiombato A."/>
            <person name="Apweiler R."/>
            <person name="Aturaliya R.N."/>
            <person name="Bailey T.L."/>
            <person name="Bansal M."/>
            <person name="Baxter L."/>
            <person name="Beisel K.W."/>
            <person name="Bersano T."/>
            <person name="Bono H."/>
            <person name="Chalk A.M."/>
            <person name="Chiu K.P."/>
            <person name="Choudhary V."/>
            <person name="Christoffels A."/>
            <person name="Clutterbuck D.R."/>
            <person name="Crowe M.L."/>
            <person name="Dalla E."/>
            <person name="Dalrymple B.P."/>
            <person name="de Bono B."/>
            <person name="Della Gatta G."/>
            <person name="di Bernardo D."/>
            <person name="Down T."/>
            <person name="Engstrom P."/>
            <person name="Fagiolini M."/>
            <person name="Faulkner G."/>
            <person name="Fletcher C.F."/>
            <person name="Fukushima T."/>
            <person name="Furuno M."/>
            <person name="Futaki S."/>
            <person name="Gariboldi M."/>
            <person name="Georgii-Hemming P."/>
            <person name="Gingeras T.R."/>
            <person name="Gojobori T."/>
            <person name="Green R.E."/>
            <person name="Gustincich S."/>
            <person name="Harbers M."/>
            <person name="Hayashi Y."/>
            <person name="Hensch T.K."/>
            <person name="Hirokawa N."/>
            <person name="Hill D."/>
            <person name="Huminiecki L."/>
            <person name="Iacono M."/>
            <person name="Ikeo K."/>
            <person name="Iwama A."/>
            <person name="Ishikawa T."/>
            <person name="Jakt M."/>
            <person name="Kanapin A."/>
            <person name="Katoh M."/>
            <person name="Kawasawa Y."/>
            <person name="Kelso J."/>
            <person name="Kitamura H."/>
            <person name="Kitano H."/>
            <person name="Kollias G."/>
            <person name="Krishnan S.P."/>
            <person name="Kruger A."/>
            <person name="Kummerfeld S.K."/>
            <person name="Kurochkin I.V."/>
            <person name="Lareau L.F."/>
            <person name="Lazarevic D."/>
            <person name="Lipovich L."/>
            <person name="Liu J."/>
            <person name="Liuni S."/>
            <person name="McWilliam S."/>
            <person name="Madan Babu M."/>
            <person name="Madera M."/>
            <person name="Marchionni L."/>
            <person name="Matsuda H."/>
            <person name="Matsuzawa S."/>
            <person name="Miki H."/>
            <person name="Mignone F."/>
            <person name="Miyake S."/>
            <person name="Morris K."/>
            <person name="Mottagui-Tabar S."/>
            <person name="Mulder N."/>
            <person name="Nakano N."/>
            <person name="Nakauchi H."/>
            <person name="Ng P."/>
            <person name="Nilsson R."/>
            <person name="Nishiguchi S."/>
            <person name="Nishikawa S."/>
            <person name="Nori F."/>
            <person name="Ohara O."/>
            <person name="Okazaki Y."/>
            <person name="Orlando V."/>
            <person name="Pang K.C."/>
            <person name="Pavan W.J."/>
            <person name="Pavesi G."/>
            <person name="Pesole G."/>
            <person name="Petrovsky N."/>
            <person name="Piazza S."/>
            <person name="Reed J."/>
            <person name="Reid J.F."/>
            <person name="Ring B.Z."/>
            <person name="Ringwald M."/>
            <person name="Rost B."/>
            <person name="Ruan Y."/>
            <person name="Salzberg S.L."/>
            <person name="Sandelin A."/>
            <person name="Schneider C."/>
            <person name="Schoenbach C."/>
            <person name="Sekiguchi K."/>
            <person name="Semple C.A."/>
            <person name="Seno S."/>
            <person name="Sessa L."/>
            <person name="Sheng Y."/>
            <person name="Shibata Y."/>
            <person name="Shimada H."/>
            <person name="Shimada K."/>
            <person name="Silva D."/>
            <person name="Sinclair B."/>
            <person name="Sperling S."/>
            <person name="Stupka E."/>
            <person name="Sugiura K."/>
            <person name="Sultana R."/>
            <person name="Takenaka Y."/>
            <person name="Taki K."/>
            <person name="Tammoja K."/>
            <person name="Tan S.L."/>
            <person name="Tang S."/>
            <person name="Taylor M.S."/>
            <person name="Tegner J."/>
            <person name="Teichmann S.A."/>
            <person name="Ueda H.R."/>
            <person name="van Nimwegen E."/>
            <person name="Verardo R."/>
            <person name="Wei C.L."/>
            <person name="Yagi K."/>
            <person name="Yamanishi H."/>
            <person name="Zabarovsky E."/>
            <person name="Zhu S."/>
            <person name="Zimmer A."/>
            <person name="Hide W."/>
            <person name="Bult C."/>
            <person name="Grimmond S.M."/>
            <person name="Teasdale R.D."/>
            <person name="Liu E.T."/>
            <person name="Brusic V."/>
            <person name="Quackenbush J."/>
            <person name="Wahlestedt C."/>
            <person name="Mattick J.S."/>
            <person name="Hume D.A."/>
            <person name="Kai C."/>
            <person name="Sasaki D."/>
            <person name="Tomaru Y."/>
            <person name="Fukuda S."/>
            <person name="Kanamori-Katayama M."/>
            <person name="Suzuki M."/>
            <person name="Aoki J."/>
            <person name="Arakawa T."/>
            <person name="Iida J."/>
            <person name="Imamura K."/>
            <person name="Itoh M."/>
            <person name="Kato T."/>
            <person name="Kawaji H."/>
            <person name="Kawagashira N."/>
            <person name="Kawashima T."/>
            <person name="Kojima M."/>
            <person name="Kondo S."/>
            <person name="Konno H."/>
            <person name="Nakano K."/>
            <person name="Ninomiya N."/>
            <person name="Nishio T."/>
            <person name="Okada M."/>
            <person name="Plessy C."/>
            <person name="Shibata K."/>
            <person name="Shiraki T."/>
            <person name="Suzuki S."/>
            <person name="Tagami M."/>
            <person name="Waki K."/>
            <person name="Watahiki A."/>
            <person name="Okamura-Oho Y."/>
            <person name="Suzuki H."/>
            <person name="Kawai J."/>
            <person name="Hayashizaki Y."/>
        </authorList>
    </citation>
    <scope>NUCLEOTIDE SEQUENCE [LARGE SCALE MRNA] (ISOFORMS 1 AND 2)</scope>
    <source>
        <strain>C57BL/6J</strain>
        <strain>NOD</strain>
        <tissue>Dendritic cell</tissue>
        <tissue>Egg</tissue>
        <tissue>Heart</tissue>
    </source>
</reference>
<reference key="3">
    <citation type="journal article" date="2004" name="Genome Res.">
        <title>The status, quality, and expansion of the NIH full-length cDNA project: the Mammalian Gene Collection (MGC).</title>
        <authorList>
            <consortium name="The MGC Project Team"/>
        </authorList>
    </citation>
    <scope>NUCLEOTIDE SEQUENCE [LARGE SCALE MRNA] (ISOFORM 1)</scope>
    <source>
        <strain>C57BL/6J</strain>
        <tissue>Head</tissue>
    </source>
</reference>
<reference key="4">
    <citation type="journal article" date="2007" name="Genes Dev.">
        <title>Switching of the core transcription machinery during myogenesis.</title>
        <authorList>
            <person name="Deato M.D.E."/>
            <person name="Tjian R."/>
        </authorList>
    </citation>
    <scope>FUNCTION</scope>
    <scope>SUBCELLULAR LOCATION</scope>
    <scope>INTERACTION WITH TBPL2</scope>
</reference>
<reference key="5">
    <citation type="journal article" date="2010" name="Cell">
        <title>A tissue-specific atlas of mouse protein phosphorylation and expression.</title>
        <authorList>
            <person name="Huttlin E.L."/>
            <person name="Jedrychowski M.P."/>
            <person name="Elias J.E."/>
            <person name="Goswami T."/>
            <person name="Rad R."/>
            <person name="Beausoleil S.A."/>
            <person name="Villen J."/>
            <person name="Haas W."/>
            <person name="Sowa M.E."/>
            <person name="Gygi S.P."/>
        </authorList>
    </citation>
    <scope>PHOSPHORYLATION [LARGE SCALE ANALYSIS] AT SER-183</scope>
    <scope>IDENTIFICATION BY MASS SPECTROMETRY [LARGE SCALE ANALYSIS]</scope>
    <source>
        <tissue>Brown adipose tissue</tissue>
        <tissue>Kidney</tissue>
        <tissue>Lung</tissue>
        <tissue>Pancreas</tissue>
        <tissue>Spleen</tissue>
        <tissue>Testis</tissue>
    </source>
</reference>
<reference key="6">
    <citation type="journal article" date="2013" name="Mol. Cell">
        <title>SIRT5-mediated lysine desuccinylation impacts diverse metabolic pathways.</title>
        <authorList>
            <person name="Park J."/>
            <person name="Chen Y."/>
            <person name="Tishkoff D.X."/>
            <person name="Peng C."/>
            <person name="Tan M."/>
            <person name="Dai L."/>
            <person name="Xie Z."/>
            <person name="Zhang Y."/>
            <person name="Zwaans B.M."/>
            <person name="Skinner M.E."/>
            <person name="Lombard D.B."/>
            <person name="Zhao Y."/>
        </authorList>
    </citation>
    <scope>ACETYLATION [LARGE SCALE ANALYSIS] AT LYS-266</scope>
    <scope>IDENTIFICATION BY MASS SPECTROMETRY [LARGE SCALE ANALYSIS]</scope>
    <source>
        <tissue>Embryonic fibroblast</tissue>
    </source>
</reference>
<reference key="7">
    <citation type="journal article" date="2008" name="Structure">
        <title>Structural insight into the recognition of the H3K4me3 mark by the TFIID subunit TAF3.</title>
        <authorList>
            <person name="van Ingen H."/>
            <person name="van Schaik F.M."/>
            <person name="Wienk H."/>
            <person name="Ballering J."/>
            <person name="Rehmann H."/>
            <person name="Dechesne A.C."/>
            <person name="Kruijzer J.A."/>
            <person name="Liskamp R.M."/>
            <person name="Timmers H.T."/>
            <person name="Boelens R."/>
        </authorList>
    </citation>
    <scope>STRUCTURE BY NMR OF 857-924 IN COMPLEX WITH H3K4ME3 PEPTIDE</scope>
</reference>
<feature type="chain" id="PRO_0000245529" description="Transcription initiation factor TFIID subunit 3">
    <location>
        <begin position="1"/>
        <end position="932"/>
    </location>
</feature>
<feature type="zinc finger region" description="PHD-type" evidence="2">
    <location>
        <begin position="867"/>
        <end position="917"/>
    </location>
</feature>
<feature type="region of interest" description="Disordered" evidence="3">
    <location>
        <begin position="130"/>
        <end position="201"/>
    </location>
</feature>
<feature type="region of interest" description="Disordered" evidence="3">
    <location>
        <begin position="213"/>
        <end position="347"/>
    </location>
</feature>
<feature type="region of interest" description="Disordered" evidence="3">
    <location>
        <begin position="403"/>
        <end position="465"/>
    </location>
</feature>
<feature type="region of interest" description="Disordered" evidence="3">
    <location>
        <begin position="480"/>
        <end position="579"/>
    </location>
</feature>
<feature type="region of interest" description="Disordered" evidence="3">
    <location>
        <begin position="607"/>
        <end position="657"/>
    </location>
</feature>
<feature type="region of interest" description="Disordered" evidence="3">
    <location>
        <begin position="681"/>
        <end position="746"/>
    </location>
</feature>
<feature type="compositionally biased region" description="Acidic residues" evidence="3">
    <location>
        <begin position="158"/>
        <end position="171"/>
    </location>
</feature>
<feature type="compositionally biased region" description="Polar residues" evidence="3">
    <location>
        <begin position="266"/>
        <end position="283"/>
    </location>
</feature>
<feature type="compositionally biased region" description="Low complexity" evidence="3">
    <location>
        <begin position="408"/>
        <end position="423"/>
    </location>
</feature>
<feature type="compositionally biased region" description="Polar residues" evidence="3">
    <location>
        <begin position="436"/>
        <end position="446"/>
    </location>
</feature>
<feature type="compositionally biased region" description="Low complexity" evidence="3">
    <location>
        <begin position="447"/>
        <end position="461"/>
    </location>
</feature>
<feature type="compositionally biased region" description="Basic and acidic residues" evidence="3">
    <location>
        <begin position="505"/>
        <end position="515"/>
    </location>
</feature>
<feature type="compositionally biased region" description="Basic residues" evidence="3">
    <location>
        <begin position="524"/>
        <end position="538"/>
    </location>
</feature>
<feature type="compositionally biased region" description="Basic and acidic residues" evidence="3">
    <location>
        <begin position="539"/>
        <end position="579"/>
    </location>
</feature>
<feature type="compositionally biased region" description="Basic and acidic residues" evidence="3">
    <location>
        <begin position="623"/>
        <end position="650"/>
    </location>
</feature>
<feature type="compositionally biased region" description="Basic and acidic residues" evidence="3">
    <location>
        <begin position="689"/>
        <end position="702"/>
    </location>
</feature>
<feature type="compositionally biased region" description="Basic residues" evidence="3">
    <location>
        <begin position="703"/>
        <end position="714"/>
    </location>
</feature>
<feature type="compositionally biased region" description="Basic and acidic residues" evidence="3">
    <location>
        <begin position="715"/>
        <end position="740"/>
    </location>
</feature>
<feature type="modified residue" description="Phosphoserine" evidence="9">
    <location>
        <position position="183"/>
    </location>
</feature>
<feature type="modified residue" description="Phosphoserine" evidence="1">
    <location>
        <position position="199"/>
    </location>
</feature>
<feature type="modified residue" description="Phosphoserine" evidence="1">
    <location>
        <position position="229"/>
    </location>
</feature>
<feature type="modified residue" description="Phosphoserine" evidence="1">
    <location>
        <position position="243"/>
    </location>
</feature>
<feature type="modified residue" description="N6-acetyllysine" evidence="10">
    <location>
        <position position="266"/>
    </location>
</feature>
<feature type="modified residue" description="Phosphoserine" evidence="1">
    <location>
        <position position="291"/>
    </location>
</feature>
<feature type="modified residue" description="Phosphoserine" evidence="1">
    <location>
        <position position="297"/>
    </location>
</feature>
<feature type="modified residue" description="Phosphoserine" evidence="1">
    <location>
        <position position="301"/>
    </location>
</feature>
<feature type="modified residue" description="Phosphothreonine" evidence="1">
    <location>
        <position position="502"/>
    </location>
</feature>
<feature type="modified residue" description="Phosphoserine" evidence="1">
    <location>
        <position position="669"/>
    </location>
</feature>
<feature type="modified residue" description="Phosphoserine" evidence="1">
    <location>
        <position position="758"/>
    </location>
</feature>
<feature type="modified residue" description="N6-acetyllysine" evidence="1">
    <location>
        <position position="779"/>
    </location>
</feature>
<feature type="cross-link" description="Glycyl lysine isopeptide (Lys-Gly) (interchain with G-Cter in SUMO2)" evidence="1">
    <location>
        <position position="582"/>
    </location>
</feature>
<feature type="cross-link" description="Glycyl lysine isopeptide (Lys-Gly) (interchain with G-Cter in SUMO2)" evidence="1">
    <location>
        <position position="749"/>
    </location>
</feature>
<feature type="splice variant" id="VSP_019736" description="In isoform 2." evidence="7">
    <location>
        <begin position="1"/>
        <end position="741"/>
    </location>
</feature>
<feature type="splice variant" id="VSP_019737" description="In isoform 2." evidence="7">
    <original>KHKHEK</original>
    <variation>MYKFPQ</variation>
    <location>
        <begin position="742"/>
        <end position="747"/>
    </location>
</feature>
<feature type="sequence conflict" description="In Ref. 2; BAE32543." evidence="8" ref="2">
    <original>R</original>
    <variation>G</variation>
    <location>
        <position position="545"/>
    </location>
</feature>
<feature type="sequence conflict" description="In Ref. 2; BAE22792." evidence="8" ref="2">
    <original>K</original>
    <variation>E</variation>
    <location>
        <position position="721"/>
    </location>
</feature>
<feature type="strand" evidence="11">
    <location>
        <begin position="857"/>
        <end position="860"/>
    </location>
</feature>
<feature type="strand" evidence="11">
    <location>
        <begin position="862"/>
        <end position="864"/>
    </location>
</feature>
<feature type="strand" evidence="11">
    <location>
        <begin position="866"/>
        <end position="868"/>
    </location>
</feature>
<feature type="turn" evidence="11">
    <location>
        <begin position="871"/>
        <end position="873"/>
    </location>
</feature>
<feature type="strand" evidence="11">
    <location>
        <begin position="882"/>
        <end position="884"/>
    </location>
</feature>
<feature type="strand" evidence="11">
    <location>
        <begin position="886"/>
        <end position="893"/>
    </location>
</feature>
<feature type="helix" evidence="11">
    <location>
        <begin position="894"/>
        <end position="897"/>
    </location>
</feature>
<feature type="strand" evidence="11">
    <location>
        <begin position="905"/>
        <end position="907"/>
    </location>
</feature>
<feature type="turn" evidence="11">
    <location>
        <begin position="912"/>
        <end position="914"/>
    </location>
</feature>
<feature type="helix" evidence="11">
    <location>
        <begin position="915"/>
        <end position="918"/>
    </location>
</feature>
<accession>Q5HZG4</accession>
<accession>Q3U490</accession>
<accession>Q3UWX2</accession>
<accession>Q8BIU8</accession>
<accession>Q99JH4</accession>
<evidence type="ECO:0000250" key="1">
    <source>
        <dbReference type="UniProtKB" id="Q5VWG9"/>
    </source>
</evidence>
<evidence type="ECO:0000255" key="2">
    <source>
        <dbReference type="PROSITE-ProRule" id="PRU00146"/>
    </source>
</evidence>
<evidence type="ECO:0000256" key="3">
    <source>
        <dbReference type="SAM" id="MobiDB-lite"/>
    </source>
</evidence>
<evidence type="ECO:0000269" key="4">
    <source>
    </source>
</evidence>
<evidence type="ECO:0000269" key="5">
    <source>
    </source>
</evidence>
<evidence type="ECO:0000269" key="6">
    <source>
    </source>
</evidence>
<evidence type="ECO:0000303" key="7">
    <source>
    </source>
</evidence>
<evidence type="ECO:0000305" key="8"/>
<evidence type="ECO:0007744" key="9">
    <source>
    </source>
</evidence>
<evidence type="ECO:0007744" key="10">
    <source>
    </source>
</evidence>
<evidence type="ECO:0007829" key="11">
    <source>
        <dbReference type="PDB" id="2K16"/>
    </source>
</evidence>
<comment type="function">
    <text evidence="1 5">The TFIID basal transcription factor complex plays a major role in the initiation of RNA polymerase II (Pol II)-dependent transcription (By similarity). TFIID recognizes and binds promoters with or without a TATA box via its subunit TBP, a TATA-box-binding protein, and promotes assembly of the pre-initiation complex (PIC) (By similarity). The TFIID complex consists of TBP and TBP-associated factors (TAFs), including TAF1, TAF2, TAF3, TAF4, TAF5, TAF6, TAF7, TAF8, TAF9, TAF10, TAF11, TAF12 and TAF13 (By similarity). The TFIID complex structure can be divided into 3 modules TFIID-A, TFIID-B, and TFIID-C (By similarity). TAF3 forms the TFIID-A module together with TAF5 and TBP (By similarity). Required in complex with TBPL2 for the differentiation of myoblasts into myocytes (PubMed:17704303). The TAF3-TBPL2 complex replaces TFIID at specific promoters at an early stage in the differentiation process (PubMed:17704303).</text>
</comment>
<comment type="subunit">
    <text evidence="1 4 5">Component of the TFIID basal transcription factor complex, composed of TATA-box-binding protein TBP, and a number of TBP-associated factors (TAFs), including TAF1, TAF2, TAF3, TAF4, TAF5, TAF6, TAF7, TAF8, TAF9, TAF10, TAF11, TAF12 and TAF13 (By similarity). Interacts with TAF10 via histone fold (PubMed:11438666). Interacts with TAF13, TBP, SAP130 and GCN5L2 (By similarity). Interacts with TBPL2 (PubMed:17704303).</text>
</comment>
<comment type="interaction">
    <interactant intactId="EBI-1561080">
        <id>Q5HZG4</id>
    </interactant>
    <interactant intactId="EBI-1571412">
        <id>Q6SJ95</id>
        <label>Tbpl2</label>
    </interactant>
    <organismsDiffer>false</organismsDiffer>
    <experiments>3</experiments>
</comment>
<comment type="subcellular location">
    <subcellularLocation>
        <location evidence="5">Nucleus</location>
    </subcellularLocation>
</comment>
<comment type="alternative products">
    <event type="alternative splicing"/>
    <isoform>
        <id>Q5HZG4-1</id>
        <name>1</name>
        <sequence type="displayed"/>
    </isoform>
    <isoform>
        <id>Q5HZG4-2</id>
        <name>2</name>
        <sequence type="described" ref="VSP_019736 VSP_019737"/>
    </isoform>
</comment>
<comment type="domain">
    <text evidence="6">The PHD-type zinc finger mediates binding to histone H3 methyllysine at position 4 (H3K4me3).</text>
</comment>
<comment type="similarity">
    <text evidence="8">Belongs to the TAF3 family.</text>
</comment>
<comment type="sequence caution" evidence="8">
    <conflict type="erroneous initiation">
        <sequence resource="EMBL-CDS" id="AAH89030"/>
    </conflict>
</comment>
<dbReference type="EMBL" id="AJ292189">
    <property type="protein sequence ID" value="CAC34476.1"/>
    <property type="molecule type" value="mRNA"/>
</dbReference>
<dbReference type="EMBL" id="AK084574">
    <property type="protein sequence ID" value="BAC39218.1"/>
    <property type="molecule type" value="mRNA"/>
</dbReference>
<dbReference type="EMBL" id="AK136045">
    <property type="protein sequence ID" value="BAE22792.1"/>
    <property type="molecule type" value="mRNA"/>
</dbReference>
<dbReference type="EMBL" id="AK154372">
    <property type="protein sequence ID" value="BAE32543.1"/>
    <property type="molecule type" value="mRNA"/>
</dbReference>
<dbReference type="EMBL" id="BC089030">
    <property type="protein sequence ID" value="AAH89030.1"/>
    <property type="status" value="ALT_INIT"/>
    <property type="molecule type" value="mRNA"/>
</dbReference>
<dbReference type="CCDS" id="CCDS15675.1">
    <molecule id="Q5HZG4-1"/>
</dbReference>
<dbReference type="RefSeq" id="NP_082024.2">
    <molecule id="Q5HZG4-1"/>
    <property type="nucleotide sequence ID" value="NM_027748.3"/>
</dbReference>
<dbReference type="PDB" id="2K16">
    <property type="method" value="NMR"/>
    <property type="chains" value="A=857-924"/>
</dbReference>
<dbReference type="PDB" id="2K17">
    <property type="method" value="NMR"/>
    <property type="chains" value="A=857-924"/>
</dbReference>
<dbReference type="PDBsum" id="2K16"/>
<dbReference type="PDBsum" id="2K17"/>
<dbReference type="BMRB" id="Q5HZG4"/>
<dbReference type="SMR" id="Q5HZG4"/>
<dbReference type="BioGRID" id="229072">
    <property type="interactions" value="3"/>
</dbReference>
<dbReference type="ComplexPortal" id="CPX-932">
    <property type="entry name" value="General transcription factor complex TFIID"/>
</dbReference>
<dbReference type="ComplexPortal" id="CPX-959">
    <property type="entry name" value="General transcription factor complex TFIID, Taf4b variant"/>
</dbReference>
<dbReference type="FunCoup" id="Q5HZG4">
    <property type="interactions" value="3281"/>
</dbReference>
<dbReference type="IntAct" id="Q5HZG4">
    <property type="interactions" value="9"/>
</dbReference>
<dbReference type="STRING" id="10090.ENSMUSP00000026888"/>
<dbReference type="GlyGen" id="Q5HZG4">
    <property type="glycosylation" value="1 site"/>
</dbReference>
<dbReference type="iPTMnet" id="Q5HZG4"/>
<dbReference type="PhosphoSitePlus" id="Q5HZG4"/>
<dbReference type="jPOST" id="Q5HZG4"/>
<dbReference type="PaxDb" id="10090-ENSMUSP00000026888"/>
<dbReference type="PeptideAtlas" id="Q5HZG4"/>
<dbReference type="ProteomicsDB" id="259350">
    <molecule id="Q5HZG4-1"/>
</dbReference>
<dbReference type="ProteomicsDB" id="259351">
    <molecule id="Q5HZG4-2"/>
</dbReference>
<dbReference type="Pumba" id="Q5HZG4"/>
<dbReference type="Antibodypedia" id="24519">
    <property type="antibodies" value="137 antibodies from 26 providers"/>
</dbReference>
<dbReference type="Ensembl" id="ENSMUST00000026888.11">
    <molecule id="Q5HZG4-1"/>
    <property type="protein sequence ID" value="ENSMUSP00000026888.5"/>
    <property type="gene ID" value="ENSMUSG00000025782.13"/>
</dbReference>
<dbReference type="GeneID" id="209361"/>
<dbReference type="KEGG" id="mmu:209361"/>
<dbReference type="UCSC" id="uc008ihk.2">
    <molecule id="Q5HZG4-2"/>
    <property type="organism name" value="mouse"/>
</dbReference>
<dbReference type="UCSC" id="uc008ihl.2">
    <molecule id="Q5HZG4-1"/>
    <property type="organism name" value="mouse"/>
</dbReference>
<dbReference type="AGR" id="MGI:2388097"/>
<dbReference type="CTD" id="83860"/>
<dbReference type="MGI" id="MGI:2388097">
    <property type="gene designation" value="Taf3"/>
</dbReference>
<dbReference type="VEuPathDB" id="HostDB:ENSMUSG00000025782"/>
<dbReference type="eggNOG" id="KOG1973">
    <property type="taxonomic scope" value="Eukaryota"/>
</dbReference>
<dbReference type="eggNOG" id="KOG2389">
    <property type="taxonomic scope" value="Eukaryota"/>
</dbReference>
<dbReference type="GeneTree" id="ENSGT00710000106806"/>
<dbReference type="HOGENOM" id="CLU_014486_0_0_1"/>
<dbReference type="InParanoid" id="Q5HZG4"/>
<dbReference type="OMA" id="ENIHMRQ"/>
<dbReference type="OrthoDB" id="436852at2759"/>
<dbReference type="PhylomeDB" id="Q5HZG4"/>
<dbReference type="TreeFam" id="TF316513"/>
<dbReference type="Reactome" id="R-MMU-674695">
    <property type="pathway name" value="RNA Polymerase II Pre-transcription Events"/>
</dbReference>
<dbReference type="Reactome" id="R-MMU-6804756">
    <property type="pathway name" value="Regulation of TP53 Activity through Phosphorylation"/>
</dbReference>
<dbReference type="Reactome" id="R-MMU-73776">
    <property type="pathway name" value="RNA Polymerase II Promoter Escape"/>
</dbReference>
<dbReference type="Reactome" id="R-MMU-73779">
    <property type="pathway name" value="RNA Polymerase II Transcription Pre-Initiation And Promoter Opening"/>
</dbReference>
<dbReference type="Reactome" id="R-MMU-75953">
    <property type="pathway name" value="RNA Polymerase II Transcription Initiation"/>
</dbReference>
<dbReference type="Reactome" id="R-MMU-76042">
    <property type="pathway name" value="RNA Polymerase II Transcription Initiation And Promoter Clearance"/>
</dbReference>
<dbReference type="BioGRID-ORCS" id="209361">
    <property type="hits" value="22 hits in 85 CRISPR screens"/>
</dbReference>
<dbReference type="ChiTaRS" id="Taf3">
    <property type="organism name" value="mouse"/>
</dbReference>
<dbReference type="EvolutionaryTrace" id="Q5HZG4"/>
<dbReference type="PRO" id="PR:Q5HZG4"/>
<dbReference type="Proteomes" id="UP000000589">
    <property type="component" value="Chromosome 2"/>
</dbReference>
<dbReference type="RNAct" id="Q5HZG4">
    <property type="molecule type" value="protein"/>
</dbReference>
<dbReference type="Bgee" id="ENSMUSG00000025782">
    <property type="expression patterns" value="Expressed in animal zygote and 236 other cell types or tissues"/>
</dbReference>
<dbReference type="ExpressionAtlas" id="Q5HZG4">
    <property type="expression patterns" value="baseline and differential"/>
</dbReference>
<dbReference type="GO" id="GO:0001673">
    <property type="term" value="C:male germ cell nucleus"/>
    <property type="evidence" value="ECO:0000314"/>
    <property type="project" value="MGI"/>
</dbReference>
<dbReference type="GO" id="GO:0031965">
    <property type="term" value="C:nuclear membrane"/>
    <property type="evidence" value="ECO:0007669"/>
    <property type="project" value="Ensembl"/>
</dbReference>
<dbReference type="GO" id="GO:0005634">
    <property type="term" value="C:nucleus"/>
    <property type="evidence" value="ECO:0000266"/>
    <property type="project" value="ComplexPortal"/>
</dbReference>
<dbReference type="GO" id="GO:0005669">
    <property type="term" value="C:transcription factor TFIID complex"/>
    <property type="evidence" value="ECO:0000266"/>
    <property type="project" value="MGI"/>
</dbReference>
<dbReference type="GO" id="GO:0140002">
    <property type="term" value="F:histone H3K4me3 reader activity"/>
    <property type="evidence" value="ECO:0007669"/>
    <property type="project" value="Ensembl"/>
</dbReference>
<dbReference type="GO" id="GO:0002039">
    <property type="term" value="F:p53 binding"/>
    <property type="evidence" value="ECO:0000353"/>
    <property type="project" value="BHF-UCL"/>
</dbReference>
<dbReference type="GO" id="GO:0046982">
    <property type="term" value="F:protein heterodimerization activity"/>
    <property type="evidence" value="ECO:0007669"/>
    <property type="project" value="InterPro"/>
</dbReference>
<dbReference type="GO" id="GO:0140416">
    <property type="term" value="F:transcription regulator inhibitor activity"/>
    <property type="evidence" value="ECO:0000314"/>
    <property type="project" value="BHF-UCL"/>
</dbReference>
<dbReference type="GO" id="GO:0008270">
    <property type="term" value="F:zinc ion binding"/>
    <property type="evidence" value="ECO:0007669"/>
    <property type="project" value="UniProtKB-KW"/>
</dbReference>
<dbReference type="GO" id="GO:0051457">
    <property type="term" value="P:maintenance of protein location in nucleus"/>
    <property type="evidence" value="ECO:0007669"/>
    <property type="project" value="Ensembl"/>
</dbReference>
<dbReference type="GO" id="GO:0042789">
    <property type="term" value="P:mRNA transcription by RNA polymerase II"/>
    <property type="evidence" value="ECO:0000266"/>
    <property type="project" value="ComplexPortal"/>
</dbReference>
<dbReference type="GO" id="GO:1901797">
    <property type="term" value="P:negative regulation of signal transduction by p53 class mediator"/>
    <property type="evidence" value="ECO:0000314"/>
    <property type="project" value="BHF-UCL"/>
</dbReference>
<dbReference type="GO" id="GO:0000122">
    <property type="term" value="P:negative regulation of transcription by RNA polymerase II"/>
    <property type="evidence" value="ECO:0000314"/>
    <property type="project" value="BHF-UCL"/>
</dbReference>
<dbReference type="GO" id="GO:0060261">
    <property type="term" value="P:positive regulation of transcription initiation by RNA polymerase II"/>
    <property type="evidence" value="ECO:0000266"/>
    <property type="project" value="ComplexPortal"/>
</dbReference>
<dbReference type="GO" id="GO:0006357">
    <property type="term" value="P:regulation of transcription by RNA polymerase II"/>
    <property type="evidence" value="ECO:0000304"/>
    <property type="project" value="MGI"/>
</dbReference>
<dbReference type="GO" id="GO:0051123">
    <property type="term" value="P:RNA polymerase II preinitiation complex assembly"/>
    <property type="evidence" value="ECO:0000266"/>
    <property type="project" value="ComplexPortal"/>
</dbReference>
<dbReference type="GO" id="GO:0006366">
    <property type="term" value="P:transcription by RNA polymerase II"/>
    <property type="evidence" value="ECO:0000304"/>
    <property type="project" value="MGI"/>
</dbReference>
<dbReference type="CDD" id="cd22916">
    <property type="entry name" value="HFD_TAF3"/>
    <property type="match status" value="1"/>
</dbReference>
<dbReference type="CDD" id="cd15522">
    <property type="entry name" value="PHD_TAF3"/>
    <property type="match status" value="1"/>
</dbReference>
<dbReference type="CDD" id="cd22249">
    <property type="entry name" value="UDM1_RNF168_RNF169-like"/>
    <property type="match status" value="1"/>
</dbReference>
<dbReference type="FunFam" id="1.10.20.10:FF:000056">
    <property type="entry name" value="Transcription initiation factor TFIID subunit 3"/>
    <property type="match status" value="1"/>
</dbReference>
<dbReference type="FunFam" id="3.30.40.10:FF:000317">
    <property type="entry name" value="transcription initiation factor TFIID subunit 3"/>
    <property type="match status" value="1"/>
</dbReference>
<dbReference type="Gene3D" id="1.10.20.10">
    <property type="entry name" value="Histone, subunit A"/>
    <property type="match status" value="1"/>
</dbReference>
<dbReference type="Gene3D" id="3.30.40.10">
    <property type="entry name" value="Zinc/RING finger domain, C3HC4 (zinc finger)"/>
    <property type="match status" value="1"/>
</dbReference>
<dbReference type="InterPro" id="IPR006565">
    <property type="entry name" value="BTP"/>
</dbReference>
<dbReference type="InterPro" id="IPR009072">
    <property type="entry name" value="Histone-fold"/>
</dbReference>
<dbReference type="InterPro" id="IPR019786">
    <property type="entry name" value="Zinc_finger_PHD-type_CS"/>
</dbReference>
<dbReference type="InterPro" id="IPR011011">
    <property type="entry name" value="Znf_FYVE_PHD"/>
</dbReference>
<dbReference type="InterPro" id="IPR001965">
    <property type="entry name" value="Znf_PHD"/>
</dbReference>
<dbReference type="InterPro" id="IPR019787">
    <property type="entry name" value="Znf_PHD-finger"/>
</dbReference>
<dbReference type="InterPro" id="IPR013083">
    <property type="entry name" value="Znf_RING/FYVE/PHD"/>
</dbReference>
<dbReference type="PANTHER" id="PTHR46452">
    <property type="entry name" value="TRANSCRIPTION INITIATION FACTOR TFIID SUBUNIT 3"/>
    <property type="match status" value="1"/>
</dbReference>
<dbReference type="PANTHER" id="PTHR46452:SF1">
    <property type="entry name" value="TRANSCRIPTION INITIATION FACTOR TFIID SUBUNIT 3"/>
    <property type="match status" value="1"/>
</dbReference>
<dbReference type="Pfam" id="PF07524">
    <property type="entry name" value="Bromo_TP"/>
    <property type="match status" value="1"/>
</dbReference>
<dbReference type="Pfam" id="PF00628">
    <property type="entry name" value="PHD"/>
    <property type="match status" value="1"/>
</dbReference>
<dbReference type="SMART" id="SM00576">
    <property type="entry name" value="BTP"/>
    <property type="match status" value="1"/>
</dbReference>
<dbReference type="SMART" id="SM00249">
    <property type="entry name" value="PHD"/>
    <property type="match status" value="1"/>
</dbReference>
<dbReference type="SUPFAM" id="SSF57903">
    <property type="entry name" value="FYVE/PHD zinc finger"/>
    <property type="match status" value="1"/>
</dbReference>
<dbReference type="PROSITE" id="PS01359">
    <property type="entry name" value="ZF_PHD_1"/>
    <property type="match status" value="1"/>
</dbReference>
<dbReference type="PROSITE" id="PS50016">
    <property type="entry name" value="ZF_PHD_2"/>
    <property type="match status" value="1"/>
</dbReference>